<comment type="function">
    <text evidence="4 5 6">Receptor for the neuromedin-U and neuromedin-S neuropeptides.</text>
</comment>
<comment type="subcellular location">
    <subcellularLocation>
        <location>Cell membrane</location>
        <topology>Multi-pass membrane protein</topology>
    </subcellularLocation>
</comment>
<comment type="tissue specificity">
    <text evidence="4 5 6">The highest level is detected in the uterus. In the central nervous system, high expression levels were found in the hypothalamus and moderate levels in both the medulla oblongata and spinal cord. Expressed in the hypothalamic paraventricular nucleus (PVN) and suprachiasmatic nuclei (SCN) of the hypothalamus. Expression is low in the gastrointestinal tract. In other peripheral tissues, moderate expression was observed in the lung and ovary.</text>
</comment>
<comment type="similarity">
    <text evidence="2">Belongs to the G-protein coupled receptor 1 family.</text>
</comment>
<keyword id="KW-1003">Cell membrane</keyword>
<keyword id="KW-1015">Disulfide bond</keyword>
<keyword id="KW-0297">G-protein coupled receptor</keyword>
<keyword id="KW-0325">Glycoprotein</keyword>
<keyword id="KW-0472">Membrane</keyword>
<keyword id="KW-0675">Receptor</keyword>
<keyword id="KW-1185">Reference proteome</keyword>
<keyword id="KW-0807">Transducer</keyword>
<keyword id="KW-0812">Transmembrane</keyword>
<keyword id="KW-1133">Transmembrane helix</keyword>
<gene>
    <name type="primary">Nmur2</name>
    <name type="synonym">Tgr1</name>
</gene>
<organism>
    <name type="scientific">Rattus norvegicus</name>
    <name type="common">Rat</name>
    <dbReference type="NCBI Taxonomy" id="10116"/>
    <lineage>
        <taxon>Eukaryota</taxon>
        <taxon>Metazoa</taxon>
        <taxon>Chordata</taxon>
        <taxon>Craniata</taxon>
        <taxon>Vertebrata</taxon>
        <taxon>Euteleostomi</taxon>
        <taxon>Mammalia</taxon>
        <taxon>Eutheria</taxon>
        <taxon>Euarchontoglires</taxon>
        <taxon>Glires</taxon>
        <taxon>Rodentia</taxon>
        <taxon>Myomorpha</taxon>
        <taxon>Muroidea</taxon>
        <taxon>Muridae</taxon>
        <taxon>Murinae</taxon>
        <taxon>Rattus</taxon>
    </lineage>
</organism>
<dbReference type="EMBL" id="AB041229">
    <property type="protein sequence ID" value="BAB13722.1"/>
    <property type="molecule type" value="mRNA"/>
</dbReference>
<dbReference type="EMBL" id="AF242875">
    <property type="protein sequence ID" value="AAF82756.1"/>
    <property type="molecule type" value="mRNA"/>
</dbReference>
<dbReference type="RefSeq" id="NP_071611.3">
    <property type="nucleotide sequence ID" value="NM_022275.3"/>
</dbReference>
<dbReference type="RefSeq" id="XP_063125876.1">
    <property type="nucleotide sequence ID" value="XM_063269806.1"/>
</dbReference>
<dbReference type="SMR" id="Q9ESQ4"/>
<dbReference type="FunCoup" id="Q9ESQ4">
    <property type="interactions" value="156"/>
</dbReference>
<dbReference type="STRING" id="10116.ENSRNOP00000018967"/>
<dbReference type="GlyCosmos" id="Q9ESQ4">
    <property type="glycosylation" value="3 sites, No reported glycans"/>
</dbReference>
<dbReference type="GlyGen" id="Q9ESQ4">
    <property type="glycosylation" value="3 sites"/>
</dbReference>
<dbReference type="PhosphoSitePlus" id="Q9ESQ4"/>
<dbReference type="PaxDb" id="10116-ENSRNOP00000018967"/>
<dbReference type="GeneID" id="64042"/>
<dbReference type="KEGG" id="rno:64042"/>
<dbReference type="UCSC" id="RGD:621155">
    <property type="organism name" value="rat"/>
</dbReference>
<dbReference type="AGR" id="RGD:621155"/>
<dbReference type="CTD" id="56923"/>
<dbReference type="RGD" id="621155">
    <property type="gene designation" value="Nmur2"/>
</dbReference>
<dbReference type="VEuPathDB" id="HostDB:ENSRNOG00000014081"/>
<dbReference type="eggNOG" id="KOG3656">
    <property type="taxonomic scope" value="Eukaryota"/>
</dbReference>
<dbReference type="HOGENOM" id="CLU_009579_6_5_1"/>
<dbReference type="InParanoid" id="Q9ESQ4"/>
<dbReference type="OrthoDB" id="5875at9989"/>
<dbReference type="PhylomeDB" id="Q9ESQ4"/>
<dbReference type="TreeFam" id="TF318522"/>
<dbReference type="Reactome" id="R-RNO-375276">
    <property type="pathway name" value="Peptide ligand-binding receptors"/>
</dbReference>
<dbReference type="Reactome" id="R-RNO-416476">
    <property type="pathway name" value="G alpha (q) signalling events"/>
</dbReference>
<dbReference type="Reactome" id="R-RNO-418594">
    <property type="pathway name" value="G alpha (i) signalling events"/>
</dbReference>
<dbReference type="PRO" id="PR:Q9ESQ4"/>
<dbReference type="Proteomes" id="UP000002494">
    <property type="component" value="Chromosome 10"/>
</dbReference>
<dbReference type="Bgee" id="ENSRNOG00000014081">
    <property type="expression patterns" value="Expressed in ovary and 2 other cell types or tissues"/>
</dbReference>
<dbReference type="GO" id="GO:0016020">
    <property type="term" value="C:membrane"/>
    <property type="evidence" value="ECO:0000266"/>
    <property type="project" value="RGD"/>
</dbReference>
<dbReference type="GO" id="GO:0005886">
    <property type="term" value="C:plasma membrane"/>
    <property type="evidence" value="ECO:0000318"/>
    <property type="project" value="GO_Central"/>
</dbReference>
<dbReference type="GO" id="GO:0005525">
    <property type="term" value="F:GTP binding"/>
    <property type="evidence" value="ECO:0000266"/>
    <property type="project" value="RGD"/>
</dbReference>
<dbReference type="GO" id="GO:0005229">
    <property type="term" value="F:intracellularly calcium-gated chloride channel activity"/>
    <property type="evidence" value="ECO:0000266"/>
    <property type="project" value="RGD"/>
</dbReference>
<dbReference type="GO" id="GO:0042924">
    <property type="term" value="F:neuromedin U binding"/>
    <property type="evidence" value="ECO:0000266"/>
    <property type="project" value="RGD"/>
</dbReference>
<dbReference type="GO" id="GO:0001607">
    <property type="term" value="F:neuromedin U receptor activity"/>
    <property type="evidence" value="ECO:0000266"/>
    <property type="project" value="RGD"/>
</dbReference>
<dbReference type="GO" id="GO:0008188">
    <property type="term" value="F:neuropeptide receptor activity"/>
    <property type="evidence" value="ECO:0000314"/>
    <property type="project" value="RGD"/>
</dbReference>
<dbReference type="GO" id="GO:0050482">
    <property type="term" value="P:arachidonate secretion"/>
    <property type="evidence" value="ECO:0000266"/>
    <property type="project" value="RGD"/>
</dbReference>
<dbReference type="GO" id="GO:0007625">
    <property type="term" value="P:grooming behavior"/>
    <property type="evidence" value="ECO:0000266"/>
    <property type="project" value="RGD"/>
</dbReference>
<dbReference type="GO" id="GO:0007218">
    <property type="term" value="P:neuropeptide signaling pathway"/>
    <property type="evidence" value="ECO:0000266"/>
    <property type="project" value="RGD"/>
</dbReference>
<dbReference type="GO" id="GO:0007200">
    <property type="term" value="P:phospholipase C-activating G protein-coupled receptor signaling pathway"/>
    <property type="evidence" value="ECO:0000266"/>
    <property type="project" value="RGD"/>
</dbReference>
<dbReference type="GO" id="GO:0002023">
    <property type="term" value="P:reduction of food intake in response to dietary excess"/>
    <property type="evidence" value="ECO:0000266"/>
    <property type="project" value="RGD"/>
</dbReference>
<dbReference type="GO" id="GO:0051930">
    <property type="term" value="P:regulation of sensory perception of pain"/>
    <property type="evidence" value="ECO:0000314"/>
    <property type="project" value="UniProtKB"/>
</dbReference>
<dbReference type="GO" id="GO:0048265">
    <property type="term" value="P:response to pain"/>
    <property type="evidence" value="ECO:0000266"/>
    <property type="project" value="RGD"/>
</dbReference>
<dbReference type="FunFam" id="1.20.1070.10:FF:000214">
    <property type="entry name" value="Neuromedin U receptor 1"/>
    <property type="match status" value="1"/>
</dbReference>
<dbReference type="Gene3D" id="1.20.1070.10">
    <property type="entry name" value="Rhodopsin 7-helix transmembrane proteins"/>
    <property type="match status" value="1"/>
</dbReference>
<dbReference type="InterPro" id="IPR000276">
    <property type="entry name" value="GPCR_Rhodpsn"/>
</dbReference>
<dbReference type="InterPro" id="IPR017452">
    <property type="entry name" value="GPCR_Rhodpsn_7TM"/>
</dbReference>
<dbReference type="InterPro" id="IPR005390">
    <property type="entry name" value="NeuromedU_rcpt"/>
</dbReference>
<dbReference type="InterPro" id="IPR005392">
    <property type="entry name" value="NeuromedU_rcpt_2"/>
</dbReference>
<dbReference type="InterPro" id="IPR045561">
    <property type="entry name" value="NMU-R2_C"/>
</dbReference>
<dbReference type="PANTHER" id="PTHR24243">
    <property type="entry name" value="G-PROTEIN COUPLED RECEPTOR"/>
    <property type="match status" value="1"/>
</dbReference>
<dbReference type="PANTHER" id="PTHR24243:SF14">
    <property type="entry name" value="NEUROMEDIN-U RECEPTOR 2"/>
    <property type="match status" value="1"/>
</dbReference>
<dbReference type="Pfam" id="PF00001">
    <property type="entry name" value="7tm_1"/>
    <property type="match status" value="1"/>
</dbReference>
<dbReference type="Pfam" id="PF19285">
    <property type="entry name" value="NmU-R2_C_term"/>
    <property type="match status" value="1"/>
</dbReference>
<dbReference type="PRINTS" id="PR00237">
    <property type="entry name" value="GPCRRHODOPSN"/>
</dbReference>
<dbReference type="PRINTS" id="PR01565">
    <property type="entry name" value="NEUROMEDINUR"/>
</dbReference>
<dbReference type="PRINTS" id="PR01567">
    <property type="entry name" value="NEUROMEDNU2R"/>
</dbReference>
<dbReference type="SMART" id="SM01381">
    <property type="entry name" value="7TM_GPCR_Srsx"/>
    <property type="match status" value="1"/>
</dbReference>
<dbReference type="SUPFAM" id="SSF81321">
    <property type="entry name" value="Family A G protein-coupled receptor-like"/>
    <property type="match status" value="1"/>
</dbReference>
<dbReference type="PROSITE" id="PS00237">
    <property type="entry name" value="G_PROTEIN_RECEP_F1_1"/>
    <property type="match status" value="1"/>
</dbReference>
<dbReference type="PROSITE" id="PS50262">
    <property type="entry name" value="G_PROTEIN_RECEP_F1_2"/>
    <property type="match status" value="1"/>
</dbReference>
<sequence>MGKLENASWIHDPLMKYLNSTEEYLAHLCGPKRSDLSLPVSVAYALIFLVGVMGNLLVCMVIVRHQTLKTPTNYYLFSLAVSDLLVLLLGMPLEIYEMWHNYPFLFGPVGCYFKTALFETVCFASILSVTTVSVERYVAIVHPFRAKLESTRRRALRILSLVWSFSVVFSLPNTSIHGIKFQHFPNGSSVPGSATCTVTKPMWVYNLIIQATSFLFYILPMTLISVLYYLMGLRLKRDESLEANKVAVNIHRPSRKSVTKMLFVLVLVFAICWTPFHVDRLFFSFVEEWTESLAAVFNLIHVVSGVFFYLSSAVNPIIYNLLSRRFRAAFRNVVSPTCKWCHPRHRPQGPPAQKIIFLTECHLVELTEDAGPQFPGQSSIHNTNLTTAPCAGEVP</sequence>
<reference key="1">
    <citation type="journal article" date="2000" name="J. Biol. Chem.">
        <title>Identification and functional characterization of a novel subtype of neuromedin U receptor.</title>
        <authorList>
            <person name="Hosoya M."/>
            <person name="Moriya T."/>
            <person name="Kawamata Y."/>
            <person name="Ohkubo S."/>
            <person name="Fujii R."/>
            <person name="Matsui H."/>
            <person name="Shintani Y."/>
            <person name="Fukusumi S."/>
            <person name="Habata Y."/>
            <person name="Hinuma S."/>
            <person name="Onda H."/>
            <person name="Nishimura O."/>
            <person name="Fujino M."/>
        </authorList>
    </citation>
    <scope>NUCLEOTIDE SEQUENCE [MRNA]</scope>
    <scope>FUNCTION</scope>
    <scope>TISSUE SPECIFICITY</scope>
</reference>
<reference key="2">
    <citation type="journal article" date="2000" name="Nature">
        <title>Identification of receptors for neuromedin U and its role in feeding.</title>
        <authorList>
            <person name="Howard A.D."/>
            <person name="Wang R."/>
            <person name="Pong S.-S."/>
            <person name="Mellin T.N."/>
            <person name="Strack A."/>
            <person name="Guan X.-M."/>
            <person name="Zeng Z."/>
            <person name="Williams D.L."/>
            <person name="Feighner S.D."/>
            <person name="Nunes C.N."/>
            <person name="Murphy B."/>
            <person name="Stair J.N."/>
            <person name="Yu H."/>
            <person name="Jiang Q."/>
            <person name="Clements M.K."/>
            <person name="Tan C.P."/>
            <person name="Mckee K.K."/>
            <person name="Hreniuk D.L."/>
            <person name="Mcdonald T.P."/>
            <person name="Lynch K.R."/>
            <person name="Evans J.F."/>
            <person name="Austin C.P."/>
            <person name="Caskey T."/>
            <person name="van der Ploeg L.H.T."/>
            <person name="Liu Q."/>
        </authorList>
    </citation>
    <scope>NUCLEOTIDE SEQUENCE [MRNA]</scope>
    <scope>FUNCTION</scope>
    <scope>TISSUE SPECIFICITY</scope>
    <source>
        <strain>Sprague-Dawley</strain>
    </source>
</reference>
<reference key="3">
    <citation type="journal article" date="2005" name="EMBO J.">
        <title>Identification of neuromedin S and its possible role in the mammalian circadian oscillator system.</title>
        <authorList>
            <person name="Mori K."/>
            <person name="Miyazato M."/>
            <person name="Ida T."/>
            <person name="Murakami N."/>
            <person name="Serino R."/>
            <person name="Ueta Y."/>
            <person name="Kojima M."/>
            <person name="Kangawa K."/>
        </authorList>
    </citation>
    <scope>FUNCTION AS A NEUROMEDIN-S RECEPTOR</scope>
    <scope>TISSUE SPECIFICITY</scope>
</reference>
<name>NMUR2_RAT</name>
<proteinExistence type="evidence at protein level"/>
<protein>
    <recommendedName>
        <fullName>Neuromedin-U receptor 2</fullName>
        <shortName>NMU-R2</shortName>
    </recommendedName>
    <alternativeName>
        <fullName>G-protein coupled receptor TGR-1</fullName>
    </alternativeName>
    <alternativeName>
        <fullName>G-protein-coupled receptor FM-4</fullName>
    </alternativeName>
</protein>
<feature type="chain" id="PRO_0000069912" description="Neuromedin-U receptor 2">
    <location>
        <begin position="1"/>
        <end position="395"/>
    </location>
</feature>
<feature type="topological domain" description="Extracellular" evidence="1">
    <location>
        <begin position="1"/>
        <end position="41"/>
    </location>
</feature>
<feature type="transmembrane region" description="Helical; Name=1" evidence="1">
    <location>
        <begin position="42"/>
        <end position="62"/>
    </location>
</feature>
<feature type="topological domain" description="Cytoplasmic" evidence="1">
    <location>
        <begin position="63"/>
        <end position="74"/>
    </location>
</feature>
<feature type="transmembrane region" description="Helical; Name=2" evidence="1">
    <location>
        <begin position="75"/>
        <end position="95"/>
    </location>
</feature>
<feature type="topological domain" description="Extracellular" evidence="1">
    <location>
        <begin position="96"/>
        <end position="115"/>
    </location>
</feature>
<feature type="transmembrane region" description="Helical; Name=3" evidence="1">
    <location>
        <begin position="116"/>
        <end position="138"/>
    </location>
</feature>
<feature type="topological domain" description="Cytoplasmic" evidence="1">
    <location>
        <begin position="139"/>
        <end position="157"/>
    </location>
</feature>
<feature type="transmembrane region" description="Helical; Name=4" evidence="1">
    <location>
        <begin position="158"/>
        <end position="178"/>
    </location>
</feature>
<feature type="topological domain" description="Extracellular" evidence="1">
    <location>
        <begin position="179"/>
        <end position="212"/>
    </location>
</feature>
<feature type="transmembrane region" description="Helical; Name=5" evidence="1">
    <location>
        <begin position="213"/>
        <end position="233"/>
    </location>
</feature>
<feature type="topological domain" description="Cytoplasmic" evidence="1">
    <location>
        <begin position="234"/>
        <end position="257"/>
    </location>
</feature>
<feature type="transmembrane region" description="Helical; Name=6" evidence="1">
    <location>
        <begin position="258"/>
        <end position="278"/>
    </location>
</feature>
<feature type="topological domain" description="Extracellular" evidence="1">
    <location>
        <begin position="279"/>
        <end position="293"/>
    </location>
</feature>
<feature type="transmembrane region" description="Helical; Name=7" evidence="1">
    <location>
        <begin position="294"/>
        <end position="314"/>
    </location>
</feature>
<feature type="topological domain" description="Cytoplasmic" evidence="1">
    <location>
        <begin position="315"/>
        <end position="395"/>
    </location>
</feature>
<feature type="region of interest" description="Disordered" evidence="3">
    <location>
        <begin position="374"/>
        <end position="395"/>
    </location>
</feature>
<feature type="compositionally biased region" description="Polar residues" evidence="3">
    <location>
        <begin position="375"/>
        <end position="387"/>
    </location>
</feature>
<feature type="glycosylation site" description="N-linked (GlcNAc...) asparagine" evidence="1">
    <location>
        <position position="6"/>
    </location>
</feature>
<feature type="glycosylation site" description="N-linked (GlcNAc...) asparagine" evidence="1">
    <location>
        <position position="19"/>
    </location>
</feature>
<feature type="glycosylation site" description="N-linked (GlcNAc...) asparagine" evidence="1">
    <location>
        <position position="186"/>
    </location>
</feature>
<feature type="disulfide bond" evidence="2">
    <location>
        <begin position="111"/>
        <end position="196"/>
    </location>
</feature>
<feature type="sequence conflict" description="In Ref. 1; BAB13722." evidence="7" ref="1">
    <original>R</original>
    <variation>Q</variation>
    <location>
        <position position="346"/>
    </location>
</feature>
<feature type="sequence conflict" description="In Ref. 1; BAB13722." evidence="7" ref="1">
    <original>V</original>
    <variation>M</variation>
    <location>
        <position position="364"/>
    </location>
</feature>
<feature type="sequence conflict" description="In Ref. 1; BAB13722." evidence="7" ref="1">
    <original>T</original>
    <variation>M</variation>
    <location>
        <position position="387"/>
    </location>
</feature>
<accession>Q9ESQ4</accession>
<accession>Q9JIB1</accession>
<evidence type="ECO:0000255" key="1"/>
<evidence type="ECO:0000255" key="2">
    <source>
        <dbReference type="PROSITE-ProRule" id="PRU00521"/>
    </source>
</evidence>
<evidence type="ECO:0000256" key="3">
    <source>
        <dbReference type="SAM" id="MobiDB-lite"/>
    </source>
</evidence>
<evidence type="ECO:0000269" key="4">
    <source>
    </source>
</evidence>
<evidence type="ECO:0000269" key="5">
    <source>
    </source>
</evidence>
<evidence type="ECO:0000269" key="6">
    <source>
    </source>
</evidence>
<evidence type="ECO:0000305" key="7"/>